<proteinExistence type="predicted"/>
<protein>
    <recommendedName>
        <fullName>SPbeta prophage-derived uncharacterized protein YonP</fullName>
    </recommendedName>
</protein>
<organism>
    <name type="scientific">Bacillus subtilis (strain 168)</name>
    <dbReference type="NCBI Taxonomy" id="224308"/>
    <lineage>
        <taxon>Bacteria</taxon>
        <taxon>Bacillati</taxon>
        <taxon>Bacillota</taxon>
        <taxon>Bacilli</taxon>
        <taxon>Bacillales</taxon>
        <taxon>Bacillaceae</taxon>
        <taxon>Bacillus</taxon>
    </lineage>
</organism>
<sequence length="64" mass="7546">MQKDSEKVTYMFSNLIGFLETAIIEGTASQEENTLYEDYKLFGTIDKKSYTYKNLVHKYLKSDY</sequence>
<name>YONP_BACSU</name>
<reference key="1">
    <citation type="journal article" date="1997" name="Nature">
        <title>The complete genome sequence of the Gram-positive bacterium Bacillus subtilis.</title>
        <authorList>
            <person name="Kunst F."/>
            <person name="Ogasawara N."/>
            <person name="Moszer I."/>
            <person name="Albertini A.M."/>
            <person name="Alloni G."/>
            <person name="Azevedo V."/>
            <person name="Bertero M.G."/>
            <person name="Bessieres P."/>
            <person name="Bolotin A."/>
            <person name="Borchert S."/>
            <person name="Borriss R."/>
            <person name="Boursier L."/>
            <person name="Brans A."/>
            <person name="Braun M."/>
            <person name="Brignell S.C."/>
            <person name="Bron S."/>
            <person name="Brouillet S."/>
            <person name="Bruschi C.V."/>
            <person name="Caldwell B."/>
            <person name="Capuano V."/>
            <person name="Carter N.M."/>
            <person name="Choi S.-K."/>
            <person name="Codani J.-J."/>
            <person name="Connerton I.F."/>
            <person name="Cummings N.J."/>
            <person name="Daniel R.A."/>
            <person name="Denizot F."/>
            <person name="Devine K.M."/>
            <person name="Duesterhoeft A."/>
            <person name="Ehrlich S.D."/>
            <person name="Emmerson P.T."/>
            <person name="Entian K.-D."/>
            <person name="Errington J."/>
            <person name="Fabret C."/>
            <person name="Ferrari E."/>
            <person name="Foulger D."/>
            <person name="Fritz C."/>
            <person name="Fujita M."/>
            <person name="Fujita Y."/>
            <person name="Fuma S."/>
            <person name="Galizzi A."/>
            <person name="Galleron N."/>
            <person name="Ghim S.-Y."/>
            <person name="Glaser P."/>
            <person name="Goffeau A."/>
            <person name="Golightly E.J."/>
            <person name="Grandi G."/>
            <person name="Guiseppi G."/>
            <person name="Guy B.J."/>
            <person name="Haga K."/>
            <person name="Haiech J."/>
            <person name="Harwood C.R."/>
            <person name="Henaut A."/>
            <person name="Hilbert H."/>
            <person name="Holsappel S."/>
            <person name="Hosono S."/>
            <person name="Hullo M.-F."/>
            <person name="Itaya M."/>
            <person name="Jones L.-M."/>
            <person name="Joris B."/>
            <person name="Karamata D."/>
            <person name="Kasahara Y."/>
            <person name="Klaerr-Blanchard M."/>
            <person name="Klein C."/>
            <person name="Kobayashi Y."/>
            <person name="Koetter P."/>
            <person name="Koningstein G."/>
            <person name="Krogh S."/>
            <person name="Kumano M."/>
            <person name="Kurita K."/>
            <person name="Lapidus A."/>
            <person name="Lardinois S."/>
            <person name="Lauber J."/>
            <person name="Lazarevic V."/>
            <person name="Lee S.-M."/>
            <person name="Levine A."/>
            <person name="Liu H."/>
            <person name="Masuda S."/>
            <person name="Mauel C."/>
            <person name="Medigue C."/>
            <person name="Medina N."/>
            <person name="Mellado R.P."/>
            <person name="Mizuno M."/>
            <person name="Moestl D."/>
            <person name="Nakai S."/>
            <person name="Noback M."/>
            <person name="Noone D."/>
            <person name="O'Reilly M."/>
            <person name="Ogawa K."/>
            <person name="Ogiwara A."/>
            <person name="Oudega B."/>
            <person name="Park S.-H."/>
            <person name="Parro V."/>
            <person name="Pohl T.M."/>
            <person name="Portetelle D."/>
            <person name="Porwollik S."/>
            <person name="Prescott A.M."/>
            <person name="Presecan E."/>
            <person name="Pujic P."/>
            <person name="Purnelle B."/>
            <person name="Rapoport G."/>
            <person name="Rey M."/>
            <person name="Reynolds S."/>
            <person name="Rieger M."/>
            <person name="Rivolta C."/>
            <person name="Rocha E."/>
            <person name="Roche B."/>
            <person name="Rose M."/>
            <person name="Sadaie Y."/>
            <person name="Sato T."/>
            <person name="Scanlan E."/>
            <person name="Schleich S."/>
            <person name="Schroeter R."/>
            <person name="Scoffone F."/>
            <person name="Sekiguchi J."/>
            <person name="Sekowska A."/>
            <person name="Seror S.J."/>
            <person name="Serror P."/>
            <person name="Shin B.-S."/>
            <person name="Soldo B."/>
            <person name="Sorokin A."/>
            <person name="Tacconi E."/>
            <person name="Takagi T."/>
            <person name="Takahashi H."/>
            <person name="Takemaru K."/>
            <person name="Takeuchi M."/>
            <person name="Tamakoshi A."/>
            <person name="Tanaka T."/>
            <person name="Terpstra P."/>
            <person name="Tognoni A."/>
            <person name="Tosato V."/>
            <person name="Uchiyama S."/>
            <person name="Vandenbol M."/>
            <person name="Vannier F."/>
            <person name="Vassarotti A."/>
            <person name="Viari A."/>
            <person name="Wambutt R."/>
            <person name="Wedler E."/>
            <person name="Wedler H."/>
            <person name="Weitzenegger T."/>
            <person name="Winters P."/>
            <person name="Wipat A."/>
            <person name="Yamamoto H."/>
            <person name="Yamane K."/>
            <person name="Yasumoto K."/>
            <person name="Yata K."/>
            <person name="Yoshida K."/>
            <person name="Yoshikawa H.-F."/>
            <person name="Zumstein E."/>
            <person name="Yoshikawa H."/>
            <person name="Danchin A."/>
        </authorList>
    </citation>
    <scope>NUCLEOTIDE SEQUENCE [LARGE SCALE GENOMIC DNA]</scope>
    <source>
        <strain>168</strain>
    </source>
</reference>
<dbReference type="EMBL" id="AL009126">
    <property type="protein sequence ID" value="CAB14021.1"/>
    <property type="molecule type" value="Genomic_DNA"/>
</dbReference>
<dbReference type="RefSeq" id="NP_389986.1">
    <property type="nucleotide sequence ID" value="NC_000964.3"/>
</dbReference>
<dbReference type="RefSeq" id="WP_004399291.1">
    <property type="nucleotide sequence ID" value="NZ_OZ025638.1"/>
</dbReference>
<dbReference type="FunCoup" id="O31944">
    <property type="interactions" value="4"/>
</dbReference>
<dbReference type="STRING" id="224308.BSU21030"/>
<dbReference type="PaxDb" id="224308-BSU21030"/>
<dbReference type="EnsemblBacteria" id="CAB14021">
    <property type="protein sequence ID" value="CAB14021"/>
    <property type="gene ID" value="BSU_21030"/>
</dbReference>
<dbReference type="GeneID" id="939168"/>
<dbReference type="KEGG" id="bsu:BSU21030"/>
<dbReference type="PATRIC" id="fig|224308.179.peg.2297"/>
<dbReference type="InParanoid" id="O31944"/>
<dbReference type="OrthoDB" id="2895439at2"/>
<dbReference type="BioCyc" id="BSUB:BSU21030-MONOMER"/>
<dbReference type="Proteomes" id="UP000001570">
    <property type="component" value="Chromosome"/>
</dbReference>
<keyword id="KW-1185">Reference proteome</keyword>
<feature type="chain" id="PRO_0000360545" description="SPbeta prophage-derived uncharacterized protein YonP">
    <location>
        <begin position="1"/>
        <end position="64"/>
    </location>
</feature>
<gene>
    <name type="primary">yonP</name>
    <name type="ordered locus">BSU21030</name>
</gene>
<accession>O31944</accession>